<gene>
    <name type="primary">rps4</name>
</gene>
<accession>A6YGA2</accession>
<evidence type="ECO:0000250" key="1"/>
<evidence type="ECO:0000256" key="2">
    <source>
        <dbReference type="SAM" id="MobiDB-lite"/>
    </source>
</evidence>
<evidence type="ECO:0000305" key="3"/>
<sequence>MSRYRGARLRIVRQFDLKQTLRGLTRKRTDNRCMPGQHRKKRNDSTKKTKNSKKVAQYQIRLQEKQKLRFNYGITESQLINYVRQARKTKGSTGETLLQLLEMRLDNIVFRLGMAPTIPAARQLVNHGHIVVNNKKVDISSYQCQSQDVISVTKNKTIRTLISNFINSKTPKNLLRNPQIPSHLIFNKSTLLGTIKSVVPRRWIGLKIKELLIVEFYSRKA</sequence>
<proteinExistence type="inferred from homology"/>
<protein>
    <recommendedName>
        <fullName evidence="3">Small ribosomal subunit protein uS4c</fullName>
    </recommendedName>
    <alternativeName>
        <fullName>30S ribosomal protein S4, chloroplastic</fullName>
    </alternativeName>
</protein>
<reference key="1">
    <citation type="journal article" date="2007" name="BMC Genomics">
        <title>The chloroplast genome sequence of the green alga Leptosira terrestris: multiple losses of the inverted repeat and extensive genome rearrangements within the Trebouxiophyceae.</title>
        <authorList>
            <person name="de Cambiaire J.-C."/>
            <person name="Otis C."/>
            <person name="Turmel M."/>
            <person name="Lemieux C."/>
        </authorList>
    </citation>
    <scope>NUCLEOTIDE SEQUENCE [LARGE SCALE GENOMIC DNA]</scope>
    <source>
        <strain>CCAP 463/2 / UTEX 333</strain>
    </source>
</reference>
<feature type="chain" id="PRO_0000322374" description="Small ribosomal subunit protein uS4c">
    <location>
        <begin position="1"/>
        <end position="221"/>
    </location>
</feature>
<feature type="domain" description="S4 RNA-binding">
    <location>
        <begin position="103"/>
        <end position="161"/>
    </location>
</feature>
<feature type="region of interest" description="Disordered" evidence="2">
    <location>
        <begin position="26"/>
        <end position="53"/>
    </location>
</feature>
<feature type="compositionally biased region" description="Basic residues" evidence="2">
    <location>
        <begin position="37"/>
        <end position="53"/>
    </location>
</feature>
<organism>
    <name type="scientific">Pleurastrum terricola</name>
    <name type="common">Filamentous green alga</name>
    <name type="synonym">Leptosira terrestris</name>
    <dbReference type="NCBI Taxonomy" id="34116"/>
    <lineage>
        <taxon>Eukaryota</taxon>
        <taxon>Viridiplantae</taxon>
        <taxon>Chlorophyta</taxon>
        <taxon>core chlorophytes</taxon>
        <taxon>Chlorophyceae</taxon>
        <taxon>CS clade</taxon>
        <taxon>Chlamydomonadales</taxon>
        <taxon>Pleurastraceae</taxon>
        <taxon>Pleurastrum</taxon>
    </lineage>
</organism>
<comment type="function">
    <text evidence="1">One of the primary rRNA binding proteins, it binds directly to 16S rRNA where it nucleates assembly of the body of the 30S subunit.</text>
</comment>
<comment type="function">
    <text evidence="1">With S5 and S12 plays an important role in translational accuracy.</text>
</comment>
<comment type="subunit">
    <text evidence="1">Part of the 30S ribosomal subunit. Contacts protein S5. The interaction surface between S4 and S5 is involved in control of translational fidelity (By similarity).</text>
</comment>
<comment type="subcellular location">
    <subcellularLocation>
        <location>Plastid</location>
        <location>Chloroplast</location>
    </subcellularLocation>
</comment>
<comment type="similarity">
    <text evidence="3">Belongs to the universal ribosomal protein uS4 family.</text>
</comment>
<keyword id="KW-0150">Chloroplast</keyword>
<keyword id="KW-0934">Plastid</keyword>
<keyword id="KW-0687">Ribonucleoprotein</keyword>
<keyword id="KW-0689">Ribosomal protein</keyword>
<keyword id="KW-0694">RNA-binding</keyword>
<keyword id="KW-0699">rRNA-binding</keyword>
<name>RR4_PLETE</name>
<dbReference type="EMBL" id="EF506945">
    <property type="protein sequence ID" value="ABO69318.1"/>
    <property type="molecule type" value="Genomic_DNA"/>
</dbReference>
<dbReference type="RefSeq" id="YP_001382179.1">
    <property type="nucleotide sequence ID" value="NC_009681.1"/>
</dbReference>
<dbReference type="SMR" id="A6YGA2"/>
<dbReference type="GeneID" id="5383718"/>
<dbReference type="GO" id="GO:0009507">
    <property type="term" value="C:chloroplast"/>
    <property type="evidence" value="ECO:0007669"/>
    <property type="project" value="UniProtKB-SubCell"/>
</dbReference>
<dbReference type="GO" id="GO:0015935">
    <property type="term" value="C:small ribosomal subunit"/>
    <property type="evidence" value="ECO:0007669"/>
    <property type="project" value="InterPro"/>
</dbReference>
<dbReference type="GO" id="GO:0019843">
    <property type="term" value="F:rRNA binding"/>
    <property type="evidence" value="ECO:0007669"/>
    <property type="project" value="UniProtKB-UniRule"/>
</dbReference>
<dbReference type="GO" id="GO:0003735">
    <property type="term" value="F:structural constituent of ribosome"/>
    <property type="evidence" value="ECO:0007669"/>
    <property type="project" value="InterPro"/>
</dbReference>
<dbReference type="GO" id="GO:0042274">
    <property type="term" value="P:ribosomal small subunit biogenesis"/>
    <property type="evidence" value="ECO:0007669"/>
    <property type="project" value="TreeGrafter"/>
</dbReference>
<dbReference type="GO" id="GO:0006412">
    <property type="term" value="P:translation"/>
    <property type="evidence" value="ECO:0007669"/>
    <property type="project" value="UniProtKB-UniRule"/>
</dbReference>
<dbReference type="CDD" id="cd00165">
    <property type="entry name" value="S4"/>
    <property type="match status" value="1"/>
</dbReference>
<dbReference type="FunFam" id="3.10.290.10:FF:000001">
    <property type="entry name" value="30S ribosomal protein S4"/>
    <property type="match status" value="1"/>
</dbReference>
<dbReference type="Gene3D" id="1.10.1050.10">
    <property type="entry name" value="Ribosomal Protein S4 Delta 41, Chain A, domain 1"/>
    <property type="match status" value="1"/>
</dbReference>
<dbReference type="Gene3D" id="3.10.290.10">
    <property type="entry name" value="RNA-binding S4 domain"/>
    <property type="match status" value="1"/>
</dbReference>
<dbReference type="HAMAP" id="MF_01306_B">
    <property type="entry name" value="Ribosomal_uS4_B"/>
    <property type="match status" value="1"/>
</dbReference>
<dbReference type="InterPro" id="IPR022801">
    <property type="entry name" value="Ribosomal_uS4"/>
</dbReference>
<dbReference type="InterPro" id="IPR005709">
    <property type="entry name" value="Ribosomal_uS4_bac-type"/>
</dbReference>
<dbReference type="InterPro" id="IPR018079">
    <property type="entry name" value="Ribosomal_uS4_CS"/>
</dbReference>
<dbReference type="InterPro" id="IPR001912">
    <property type="entry name" value="Ribosomal_uS4_N"/>
</dbReference>
<dbReference type="InterPro" id="IPR002942">
    <property type="entry name" value="S4_RNA-bd"/>
</dbReference>
<dbReference type="InterPro" id="IPR036986">
    <property type="entry name" value="S4_RNA-bd_sf"/>
</dbReference>
<dbReference type="NCBIfam" id="NF003717">
    <property type="entry name" value="PRK05327.1"/>
    <property type="match status" value="1"/>
</dbReference>
<dbReference type="NCBIfam" id="TIGR01017">
    <property type="entry name" value="rpsD_bact"/>
    <property type="match status" value="1"/>
</dbReference>
<dbReference type="PANTHER" id="PTHR11831">
    <property type="entry name" value="30S 40S RIBOSOMAL PROTEIN"/>
    <property type="match status" value="1"/>
</dbReference>
<dbReference type="PANTHER" id="PTHR11831:SF4">
    <property type="entry name" value="SMALL RIBOSOMAL SUBUNIT PROTEIN US4M"/>
    <property type="match status" value="1"/>
</dbReference>
<dbReference type="Pfam" id="PF00163">
    <property type="entry name" value="Ribosomal_S4"/>
    <property type="match status" value="1"/>
</dbReference>
<dbReference type="Pfam" id="PF01479">
    <property type="entry name" value="S4"/>
    <property type="match status" value="1"/>
</dbReference>
<dbReference type="SMART" id="SM01390">
    <property type="entry name" value="Ribosomal_S4"/>
    <property type="match status" value="1"/>
</dbReference>
<dbReference type="SMART" id="SM00363">
    <property type="entry name" value="S4"/>
    <property type="match status" value="1"/>
</dbReference>
<dbReference type="SUPFAM" id="SSF55174">
    <property type="entry name" value="Alpha-L RNA-binding motif"/>
    <property type="match status" value="1"/>
</dbReference>
<dbReference type="PROSITE" id="PS00632">
    <property type="entry name" value="RIBOSOMAL_S4"/>
    <property type="match status" value="1"/>
</dbReference>
<dbReference type="PROSITE" id="PS50889">
    <property type="entry name" value="S4"/>
    <property type="match status" value="1"/>
</dbReference>
<geneLocation type="chloroplast"/>